<sequence length="253" mass="27373">MRELKVVGLDADGKNIICQGAIPSEQFKLPVDDRLRAALRDDSVQPEQAQLDIEVTNVLSPKEIQARIRAGASVEQVAAASGSDIARIRRFAHPVLLERSRAAELATAAHPVLADGPAVLTMQETVAAALVARGLNPDSLTWDAWRNEDSRWTVQLAWKAGRSDNLAHFRFTPGAHGGTATAIDDTAHELINPTFNRPLRPLAPVAHLDFDEPEPAQPTLTVPSAQPVSNRRGKPAIPAWEDVLLGVRSGGRR</sequence>
<gene>
    <name type="ordered locus">Rv0883c</name>
    <name type="ORF">MTCY31.11c</name>
</gene>
<feature type="chain" id="PRO_0000103725" description="Uncharacterized protein Rv0883c">
    <location>
        <begin position="1"/>
        <end position="253"/>
    </location>
</feature>
<feature type="region of interest" description="Disordered" evidence="1">
    <location>
        <begin position="211"/>
        <end position="235"/>
    </location>
</feature>
<feature type="compositionally biased region" description="Polar residues" evidence="1">
    <location>
        <begin position="218"/>
        <end position="229"/>
    </location>
</feature>
<name>Y883_MYCTU</name>
<keyword id="KW-1185">Reference proteome</keyword>
<reference key="1">
    <citation type="journal article" date="1998" name="Nature">
        <title>Deciphering the biology of Mycobacterium tuberculosis from the complete genome sequence.</title>
        <authorList>
            <person name="Cole S.T."/>
            <person name="Brosch R."/>
            <person name="Parkhill J."/>
            <person name="Garnier T."/>
            <person name="Churcher C.M."/>
            <person name="Harris D.E."/>
            <person name="Gordon S.V."/>
            <person name="Eiglmeier K."/>
            <person name="Gas S."/>
            <person name="Barry C.E. III"/>
            <person name="Tekaia F."/>
            <person name="Badcock K."/>
            <person name="Basham D."/>
            <person name="Brown D."/>
            <person name="Chillingworth T."/>
            <person name="Connor R."/>
            <person name="Davies R.M."/>
            <person name="Devlin K."/>
            <person name="Feltwell T."/>
            <person name="Gentles S."/>
            <person name="Hamlin N."/>
            <person name="Holroyd S."/>
            <person name="Hornsby T."/>
            <person name="Jagels K."/>
            <person name="Krogh A."/>
            <person name="McLean J."/>
            <person name="Moule S."/>
            <person name="Murphy L.D."/>
            <person name="Oliver S."/>
            <person name="Osborne J."/>
            <person name="Quail M.A."/>
            <person name="Rajandream M.A."/>
            <person name="Rogers J."/>
            <person name="Rutter S."/>
            <person name="Seeger K."/>
            <person name="Skelton S."/>
            <person name="Squares S."/>
            <person name="Squares R."/>
            <person name="Sulston J.E."/>
            <person name="Taylor K."/>
            <person name="Whitehead S."/>
            <person name="Barrell B.G."/>
        </authorList>
    </citation>
    <scope>NUCLEOTIDE SEQUENCE [LARGE SCALE GENOMIC DNA]</scope>
    <source>
        <strain>ATCC 25618 / H37Rv</strain>
    </source>
</reference>
<reference key="2">
    <citation type="journal article" date="2011" name="Mol. Cell. Proteomics">
        <title>Proteogenomic analysis of Mycobacterium tuberculosis by high resolution mass spectrometry.</title>
        <authorList>
            <person name="Kelkar D.S."/>
            <person name="Kumar D."/>
            <person name="Kumar P."/>
            <person name="Balakrishnan L."/>
            <person name="Muthusamy B."/>
            <person name="Yadav A.K."/>
            <person name="Shrivastava P."/>
            <person name="Marimuthu A."/>
            <person name="Anand S."/>
            <person name="Sundaram H."/>
            <person name="Kingsbury R."/>
            <person name="Harsha H.C."/>
            <person name="Nair B."/>
            <person name="Prasad T.S."/>
            <person name="Chauhan D.S."/>
            <person name="Katoch K."/>
            <person name="Katoch V.M."/>
            <person name="Kumar P."/>
            <person name="Chaerkady R."/>
            <person name="Ramachandran S."/>
            <person name="Dash D."/>
            <person name="Pandey A."/>
        </authorList>
    </citation>
    <scope>IDENTIFICATION BY MASS SPECTROMETRY [LARGE SCALE ANALYSIS]</scope>
    <source>
        <strain>ATCC 25618 / H37Rv</strain>
    </source>
</reference>
<organism>
    <name type="scientific">Mycobacterium tuberculosis (strain ATCC 25618 / H37Rv)</name>
    <dbReference type="NCBI Taxonomy" id="83332"/>
    <lineage>
        <taxon>Bacteria</taxon>
        <taxon>Bacillati</taxon>
        <taxon>Actinomycetota</taxon>
        <taxon>Actinomycetes</taxon>
        <taxon>Mycobacteriales</taxon>
        <taxon>Mycobacteriaceae</taxon>
        <taxon>Mycobacterium</taxon>
        <taxon>Mycobacterium tuberculosis complex</taxon>
    </lineage>
</organism>
<dbReference type="EMBL" id="AL123456">
    <property type="protein sequence ID" value="CCP43631.1"/>
    <property type="molecule type" value="Genomic_DNA"/>
</dbReference>
<dbReference type="PIR" id="H70780">
    <property type="entry name" value="H70780"/>
</dbReference>
<dbReference type="RefSeq" id="NP_215398.1">
    <property type="nucleotide sequence ID" value="NC_000962.3"/>
</dbReference>
<dbReference type="SMR" id="P9WKQ7"/>
<dbReference type="STRING" id="83332.Rv0883c"/>
<dbReference type="PaxDb" id="83332-Rv0883c"/>
<dbReference type="DNASU" id="885139"/>
<dbReference type="GeneID" id="885139"/>
<dbReference type="KEGG" id="mtu:Rv0883c"/>
<dbReference type="KEGG" id="mtv:RVBD_0883c"/>
<dbReference type="TubercuList" id="Rv0883c"/>
<dbReference type="eggNOG" id="ENOG502ZCFK">
    <property type="taxonomic scope" value="Bacteria"/>
</dbReference>
<dbReference type="InParanoid" id="P9WKQ7"/>
<dbReference type="OrthoDB" id="5180791at2"/>
<dbReference type="PhylomeDB" id="P9WKQ7"/>
<dbReference type="Proteomes" id="UP000001584">
    <property type="component" value="Chromosome"/>
</dbReference>
<dbReference type="InterPro" id="IPR021421">
    <property type="entry name" value="DUF3071"/>
</dbReference>
<dbReference type="InterPro" id="IPR047682">
    <property type="entry name" value="SepH-like"/>
</dbReference>
<dbReference type="NCBIfam" id="NF040712">
    <property type="entry name" value="SepH"/>
    <property type="match status" value="1"/>
</dbReference>
<dbReference type="Pfam" id="PF11268">
    <property type="entry name" value="DUF3071"/>
    <property type="match status" value="1"/>
</dbReference>
<accession>P9WKQ7</accession>
<accession>L0T568</accession>
<accession>P64739</accession>
<accession>Q10545</accession>
<proteinExistence type="evidence at protein level"/>
<protein>
    <recommendedName>
        <fullName>Uncharacterized protein Rv0883c</fullName>
    </recommendedName>
</protein>
<evidence type="ECO:0000256" key="1">
    <source>
        <dbReference type="SAM" id="MobiDB-lite"/>
    </source>
</evidence>